<comment type="function">
    <text evidence="1">Part of the Tol-Pal system, which plays a role in outer membrane invagination during cell division and is important for maintaining outer membrane integrity. Required, with TolQ, for the proton motive force-dependent activation of TolA and for TolA-Pal interaction.</text>
</comment>
<comment type="subunit">
    <text evidence="1">The Tol-Pal system is composed of five core proteins: the inner membrane proteins TolA, TolQ and TolR, the periplasmic protein TolB and the outer membrane protein Pal. They form a network linking the inner and outer membranes and the peptidoglycan layer.</text>
</comment>
<comment type="subcellular location">
    <subcellularLocation>
        <location evidence="1">Cell inner membrane</location>
        <topology evidence="1">Single-pass membrane protein</topology>
    </subcellularLocation>
</comment>
<comment type="similarity">
    <text evidence="1 2">Belongs to the ExbD/TolR family.</text>
</comment>
<name>TOLR_ECO57</name>
<sequence length="142" mass="15383">MARARGRGRRDLKSEINIVPLLDVLLVLLLIFMATAPIITQSVEVDLPDATESQAVSSNDNPPVIVEVSGIGQYTVVVEKDRLERLPPEQVVAEVSSRFKANPKTVFLIGGAKDVPYDEIIKALNLLHSAGVKSVGLMTQPI</sequence>
<keyword id="KW-0131">Cell cycle</keyword>
<keyword id="KW-0132">Cell division</keyword>
<keyword id="KW-0997">Cell inner membrane</keyword>
<keyword id="KW-1003">Cell membrane</keyword>
<keyword id="KW-0472">Membrane</keyword>
<keyword id="KW-1185">Reference proteome</keyword>
<keyword id="KW-0812">Transmembrane</keyword>
<keyword id="KW-1133">Transmembrane helix</keyword>
<reference key="1">
    <citation type="journal article" date="2001" name="Nature">
        <title>Genome sequence of enterohaemorrhagic Escherichia coli O157:H7.</title>
        <authorList>
            <person name="Perna N.T."/>
            <person name="Plunkett G. III"/>
            <person name="Burland V."/>
            <person name="Mau B."/>
            <person name="Glasner J.D."/>
            <person name="Rose D.J."/>
            <person name="Mayhew G.F."/>
            <person name="Evans P.S."/>
            <person name="Gregor J."/>
            <person name="Kirkpatrick H.A."/>
            <person name="Posfai G."/>
            <person name="Hackett J."/>
            <person name="Klink S."/>
            <person name="Boutin A."/>
            <person name="Shao Y."/>
            <person name="Miller L."/>
            <person name="Grotbeck E.J."/>
            <person name="Davis N.W."/>
            <person name="Lim A."/>
            <person name="Dimalanta E.T."/>
            <person name="Potamousis K."/>
            <person name="Apodaca J."/>
            <person name="Anantharaman T.S."/>
            <person name="Lin J."/>
            <person name="Yen G."/>
            <person name="Schwartz D.C."/>
            <person name="Welch R.A."/>
            <person name="Blattner F.R."/>
        </authorList>
    </citation>
    <scope>NUCLEOTIDE SEQUENCE [LARGE SCALE GENOMIC DNA]</scope>
    <source>
        <strain>O157:H7 / EDL933 / ATCC 700927 / EHEC</strain>
    </source>
</reference>
<reference key="2">
    <citation type="journal article" date="2001" name="DNA Res.">
        <title>Complete genome sequence of enterohemorrhagic Escherichia coli O157:H7 and genomic comparison with a laboratory strain K-12.</title>
        <authorList>
            <person name="Hayashi T."/>
            <person name="Makino K."/>
            <person name="Ohnishi M."/>
            <person name="Kurokawa K."/>
            <person name="Ishii K."/>
            <person name="Yokoyama K."/>
            <person name="Han C.-G."/>
            <person name="Ohtsubo E."/>
            <person name="Nakayama K."/>
            <person name="Murata T."/>
            <person name="Tanaka M."/>
            <person name="Tobe T."/>
            <person name="Iida T."/>
            <person name="Takami H."/>
            <person name="Honda T."/>
            <person name="Sasakawa C."/>
            <person name="Ogasawara N."/>
            <person name="Yasunaga T."/>
            <person name="Kuhara S."/>
            <person name="Shiba T."/>
            <person name="Hattori M."/>
            <person name="Shinagawa H."/>
        </authorList>
    </citation>
    <scope>NUCLEOTIDE SEQUENCE [LARGE SCALE GENOMIC DNA]</scope>
    <source>
        <strain>O157:H7 / Sakai / RIMD 0509952 / EHEC</strain>
    </source>
</reference>
<accession>P0ABV8</accession>
<accession>P05829</accession>
<dbReference type="EMBL" id="AE005174">
    <property type="protein sequence ID" value="AAG55074.1"/>
    <property type="molecule type" value="Genomic_DNA"/>
</dbReference>
<dbReference type="EMBL" id="BA000007">
    <property type="protein sequence ID" value="BAB34196.1"/>
    <property type="molecule type" value="Genomic_DNA"/>
</dbReference>
<dbReference type="PIR" id="E90725">
    <property type="entry name" value="E90725"/>
</dbReference>
<dbReference type="PIR" id="F85576">
    <property type="entry name" value="F85576"/>
</dbReference>
<dbReference type="RefSeq" id="NP_308800.1">
    <property type="nucleotide sequence ID" value="NC_002695.1"/>
</dbReference>
<dbReference type="RefSeq" id="WP_000090097.1">
    <property type="nucleotide sequence ID" value="NZ_VOAI01000019.1"/>
</dbReference>
<dbReference type="SMR" id="P0ABV8"/>
<dbReference type="STRING" id="155864.Z0906"/>
<dbReference type="TCDB" id="1.A.30.2.2">
    <property type="family name" value="the h(+)- or na(+)-translocating bacterial flagellar motor/exbbd outer membrane transport energizer (mot/exb) superfamily"/>
</dbReference>
<dbReference type="GeneID" id="917504"/>
<dbReference type="GeneID" id="93776746"/>
<dbReference type="KEGG" id="ece:Z0906"/>
<dbReference type="KEGG" id="ecs:ECs_0773"/>
<dbReference type="PATRIC" id="fig|386585.9.peg.892"/>
<dbReference type="eggNOG" id="COG0848">
    <property type="taxonomic scope" value="Bacteria"/>
</dbReference>
<dbReference type="HOGENOM" id="CLU_085305_1_3_6"/>
<dbReference type="OMA" id="QPMSEIN"/>
<dbReference type="Proteomes" id="UP000000558">
    <property type="component" value="Chromosome"/>
</dbReference>
<dbReference type="Proteomes" id="UP000002519">
    <property type="component" value="Chromosome"/>
</dbReference>
<dbReference type="GO" id="GO:0005886">
    <property type="term" value="C:plasma membrane"/>
    <property type="evidence" value="ECO:0007669"/>
    <property type="project" value="UniProtKB-SubCell"/>
</dbReference>
<dbReference type="GO" id="GO:0022857">
    <property type="term" value="F:transmembrane transporter activity"/>
    <property type="evidence" value="ECO:0007669"/>
    <property type="project" value="InterPro"/>
</dbReference>
<dbReference type="GO" id="GO:0051301">
    <property type="term" value="P:cell division"/>
    <property type="evidence" value="ECO:0007669"/>
    <property type="project" value="UniProtKB-UniRule"/>
</dbReference>
<dbReference type="GO" id="GO:0015031">
    <property type="term" value="P:protein transport"/>
    <property type="evidence" value="ECO:0007669"/>
    <property type="project" value="InterPro"/>
</dbReference>
<dbReference type="FunFam" id="3.30.420.270:FF:000001">
    <property type="entry name" value="Tol-Pal system protein TolR"/>
    <property type="match status" value="1"/>
</dbReference>
<dbReference type="Gene3D" id="3.30.420.270">
    <property type="match status" value="1"/>
</dbReference>
<dbReference type="HAMAP" id="MF_02203">
    <property type="entry name" value="TolR"/>
    <property type="match status" value="1"/>
</dbReference>
<dbReference type="InterPro" id="IPR003400">
    <property type="entry name" value="ExbD"/>
</dbReference>
<dbReference type="InterPro" id="IPR014168">
    <property type="entry name" value="Tol-Pal_TolR"/>
</dbReference>
<dbReference type="NCBIfam" id="NF008248">
    <property type="entry name" value="PRK11024.1"/>
    <property type="match status" value="1"/>
</dbReference>
<dbReference type="NCBIfam" id="TIGR02801">
    <property type="entry name" value="tolR"/>
    <property type="match status" value="1"/>
</dbReference>
<dbReference type="PANTHER" id="PTHR30558">
    <property type="entry name" value="EXBD MEMBRANE COMPONENT OF PMF-DRIVEN MACROMOLECULE IMPORT SYSTEM"/>
    <property type="match status" value="1"/>
</dbReference>
<dbReference type="PANTHER" id="PTHR30558:SF7">
    <property type="entry name" value="TOL-PAL SYSTEM PROTEIN TOLR"/>
    <property type="match status" value="1"/>
</dbReference>
<dbReference type="Pfam" id="PF02472">
    <property type="entry name" value="ExbD"/>
    <property type="match status" value="1"/>
</dbReference>
<feature type="chain" id="PRO_0000129141" description="Tol-Pal system protein TolR">
    <location>
        <begin position="1"/>
        <end position="142"/>
    </location>
</feature>
<feature type="topological domain" description="Cytoplasmic" evidence="2">
    <location>
        <begin position="1"/>
        <end position="17"/>
    </location>
</feature>
<feature type="transmembrane region" description="Helical" evidence="1">
    <location>
        <begin position="18"/>
        <end position="38"/>
    </location>
</feature>
<feature type="topological domain" description="Periplasmic" evidence="2">
    <location>
        <begin position="39"/>
        <end position="142"/>
    </location>
</feature>
<protein>
    <recommendedName>
        <fullName evidence="1">Tol-Pal system protein TolR</fullName>
    </recommendedName>
</protein>
<gene>
    <name evidence="1" type="primary">tolR</name>
    <name type="ordered locus">Z0906</name>
    <name type="ordered locus">ECs0773</name>
</gene>
<proteinExistence type="inferred from homology"/>
<organism>
    <name type="scientific">Escherichia coli O157:H7</name>
    <dbReference type="NCBI Taxonomy" id="83334"/>
    <lineage>
        <taxon>Bacteria</taxon>
        <taxon>Pseudomonadati</taxon>
        <taxon>Pseudomonadota</taxon>
        <taxon>Gammaproteobacteria</taxon>
        <taxon>Enterobacterales</taxon>
        <taxon>Enterobacteriaceae</taxon>
        <taxon>Escherichia</taxon>
    </lineage>
</organism>
<evidence type="ECO:0000255" key="1">
    <source>
        <dbReference type="HAMAP-Rule" id="MF_02203"/>
    </source>
</evidence>
<evidence type="ECO:0000305" key="2"/>